<evidence type="ECO:0000250" key="1">
    <source>
        <dbReference type="UniProtKB" id="A0A0F6B5X3"/>
    </source>
</evidence>
<evidence type="ECO:0000269" key="2">
    <source>
    </source>
</evidence>
<evidence type="ECO:0000269" key="3">
    <source>
    </source>
</evidence>
<evidence type="ECO:0000269" key="4">
    <source>
    </source>
</evidence>
<evidence type="ECO:0000303" key="5">
    <source>
    </source>
</evidence>
<evidence type="ECO:0000303" key="6">
    <source>
    </source>
</evidence>
<evidence type="ECO:0000305" key="7"/>
<evidence type="ECO:0000312" key="8">
    <source>
        <dbReference type="EMBL" id="ACY91530.1"/>
    </source>
</evidence>
<evidence type="ECO:0007744" key="9">
    <source>
        <dbReference type="PDB" id="7AK7"/>
    </source>
</evidence>
<evidence type="ECO:0007829" key="10">
    <source>
        <dbReference type="PDB" id="7AK7"/>
    </source>
</evidence>
<name>TACA2_SALT1</name>
<feature type="chain" id="PRO_0000461697" description="Antitoxin TacA2">
    <location>
        <begin position="1"/>
        <end position="97"/>
    </location>
</feature>
<feature type="region of interest" description="Neutralization domain" evidence="4">
    <location>
        <begin position="58"/>
        <end position="97"/>
    </location>
</feature>
<feature type="mutagenesis site" description="18% antitoxin neutralization ability." evidence="4">
    <location>
        <begin position="81"/>
        <end position="97"/>
    </location>
</feature>
<feature type="strand" evidence="10">
    <location>
        <begin position="12"/>
        <end position="17"/>
    </location>
</feature>
<feature type="helix" evidence="10">
    <location>
        <begin position="20"/>
        <end position="33"/>
    </location>
</feature>
<feature type="helix" evidence="10">
    <location>
        <begin position="37"/>
        <end position="54"/>
    </location>
</feature>
<feature type="strand" evidence="10">
    <location>
        <begin position="57"/>
        <end position="61"/>
    </location>
</feature>
<feature type="helix" evidence="10">
    <location>
        <begin position="63"/>
        <end position="74"/>
    </location>
</feature>
<feature type="helix" evidence="10">
    <location>
        <begin position="81"/>
        <end position="88"/>
    </location>
</feature>
<feature type="helix" evidence="10">
    <location>
        <begin position="92"/>
        <end position="94"/>
    </location>
</feature>
<reference evidence="8" key="1">
    <citation type="journal article" date="2010" name="J. Bacteriol.">
        <title>Short-term signatures of evolutionary change in the Salmonella enterica serovar typhimurium 14028 genome.</title>
        <authorList>
            <person name="Jarvik T."/>
            <person name="Smillie C."/>
            <person name="Groisman E.A."/>
            <person name="Ochman H."/>
        </authorList>
    </citation>
    <scope>NUCLEOTIDE SEQUENCE [LARGE SCALE GENOMIC DNA]</scope>
    <source>
        <strain>14028s / SGSC 2262</strain>
    </source>
</reference>
<reference key="2">
    <citation type="journal article" date="2014" name="Science">
        <title>Internalization of Salmonella by macrophages induces formation of nonreplicating persisters.</title>
        <authorList>
            <person name="Helaine S."/>
            <person name="Cheverton A.M."/>
            <person name="Watson K.G."/>
            <person name="Faure L.M."/>
            <person name="Matthews S.A."/>
            <person name="Holden D.W."/>
        </authorList>
    </citation>
    <scope>OPERON FUNCTION IN PERSISTER CELL FORMATION</scope>
    <scope>INDUCTION IN HOST MACROPHAGES</scope>
    <scope>DISRUPTION PHENOTYPE</scope>
    <source>
        <strain>14028s / SGSC 2262</strain>
    </source>
</reference>
<reference key="3">
    <citation type="journal article" date="2018" name="Nat. Commun.">
        <title>Activity of acetyltransferase toxins involved in Salmonella persister formation during macrophage infection.</title>
        <authorList>
            <person name="Rycroft J.A."/>
            <person name="Gollan B."/>
            <person name="Grabe G.J."/>
            <person name="Hall A."/>
            <person name="Cheverton A.M."/>
            <person name="Larrouy-Maumus G."/>
            <person name="Hare S.A."/>
            <person name="Helaine S."/>
        </authorList>
    </citation>
    <scope>FUNCTION AS AN ANTITOXIN</scope>
    <scope>SUBUNIT</scope>
    <scope>DISRUPTION PHENOTYPE</scope>
    <source>
        <strain>14028s / SGSC 2262</strain>
    </source>
</reference>
<reference evidence="9" key="4">
    <citation type="journal article" date="2021" name="Nat. Chem. Biol.">
        <title>Auxiliary interfaces support the evolution of specific toxin-antitoxin pairing.</title>
        <authorList>
            <person name="Grabe G.J."/>
            <person name="Giorgio R.T."/>
            <person name="Hall A.M.J."/>
            <person name="Morgan R.M.L."/>
            <person name="Dubois L."/>
            <person name="Sisley T.A."/>
            <person name="Rycroft J.A."/>
            <person name="Hare S.A."/>
            <person name="Helaine S."/>
        </authorList>
    </citation>
    <scope>X-RAY CRYSTALLOGRAPHY (2.14 ANGSTROMS) IN COMPLEX WITH TOXIN</scope>
    <scope>FUNCTION AS AN ANTITOXIN</scope>
    <scope>SUBUNIT</scope>
    <scope>DOMAIN</scope>
    <scope>MUTAGENESIS OF 81-ALA--LYS-98</scope>
    <source>
        <strain>14028s / SGSC 2262</strain>
    </source>
</reference>
<organism>
    <name type="scientific">Salmonella typhimurium (strain 14028s / SGSC 2262)</name>
    <dbReference type="NCBI Taxonomy" id="588858"/>
    <lineage>
        <taxon>Bacteria</taxon>
        <taxon>Pseudomonadati</taxon>
        <taxon>Pseudomonadota</taxon>
        <taxon>Gammaproteobacteria</taxon>
        <taxon>Enterobacterales</taxon>
        <taxon>Enterobacteriaceae</taxon>
        <taxon>Salmonella</taxon>
    </lineage>
</organism>
<comment type="function">
    <text evidence="2 3 4">Antitoxin component of a type II toxin-antitoxin (TA) system (PubMed:29777131, PubMed:34556858). Counteracts the toxic effect of cognate toxin TacT2, but not TacT1 or TacT3 (PubMed:29777131, PubMed:34556858). Plays a role in persister cell formation (PubMed:24408438).</text>
</comment>
<comment type="function">
    <text evidence="1">The TacA2-TacT2 complex both represses and derepresses expression of its own operon.</text>
</comment>
<comment type="subunit">
    <text evidence="3 4">Homodimer (PubMed:34556858). Forms a complex with cognate toxin TacT2 (PubMed:29777131). Forms a 4:2 antitoxin:toxin complex with cognate toxin TacT2 (PubMed:34556858).</text>
</comment>
<comment type="induction">
    <text evidence="2">The tacA2-tacT2 operon is up-regulated about 15-fold in a relA-spoT-dependent manner within 30 minutes of phagocytosis by mouse bone marrow-derived macrophages.</text>
</comment>
<comment type="domain">
    <text evidence="4">The neutralization domain (ND) is sufficient to counteract the toxic effect of its cognate toxin, although other regions also play a role. Exchanging the C-terminus (probably the last 17 residue) for those in TacA1 (probably 15 residues) allows the chimera to neutralize TacT1.</text>
</comment>
<comment type="disruption phenotype">
    <text evidence="2 3">Deleting the operon causes 90% reduction in persister cell formation in mouse bone marrow-derived macrophages (PubMed:24408438). All 3 tacA-tacT operons can be deleted without an effect on growth in cell culture (PubMed:29777131).</text>
</comment>
<comment type="similarity">
    <text evidence="7">Belongs to the TacA antitoxin family.</text>
</comment>
<proteinExistence type="evidence at protein level"/>
<sequence>MPAANSMAMKRETLNLRIKPAERDLIDRAAKARGKNRTDFVLEAARAAAEEALIEQRIIMADPEAYQEFLVRLDQTPSPNAALRKTMQTPAPWEQEK</sequence>
<gene>
    <name evidence="6" type="primary">tacA2</name>
    <name evidence="5" type="synonym">a9</name>
    <name evidence="8" type="ordered locus">STM14_5191</name>
</gene>
<dbReference type="EMBL" id="CP001363">
    <property type="protein sequence ID" value="ACY91530.1"/>
    <property type="molecule type" value="Genomic_DNA"/>
</dbReference>
<dbReference type="RefSeq" id="WP_001110452.1">
    <property type="nucleotide sequence ID" value="NZ_CP043402.1"/>
</dbReference>
<dbReference type="PDB" id="7AK7">
    <property type="method" value="X-ray"/>
    <property type="resolution" value="2.14 A"/>
    <property type="chains" value="C/D/E/F=1-97"/>
</dbReference>
<dbReference type="PDBsum" id="7AK7"/>
<dbReference type="SMR" id="A0A0F6BAH8"/>
<dbReference type="KEGG" id="seo:STM14_5191"/>
<dbReference type="PATRIC" id="fig|588858.6.peg.4696"/>
<dbReference type="HOGENOM" id="CLU_152494_1_0_6"/>
<dbReference type="BioCyc" id="SENT588858:STM14_RS22655-MONOMER"/>
<dbReference type="Proteomes" id="UP000002695">
    <property type="component" value="Chromosome"/>
</dbReference>
<dbReference type="GO" id="GO:0003677">
    <property type="term" value="F:DNA binding"/>
    <property type="evidence" value="ECO:0007669"/>
    <property type="project" value="UniProtKB-KW"/>
</dbReference>
<dbReference type="GO" id="GO:0006355">
    <property type="term" value="P:regulation of DNA-templated transcription"/>
    <property type="evidence" value="ECO:0007669"/>
    <property type="project" value="InterPro"/>
</dbReference>
<dbReference type="Gene3D" id="1.20.5.780">
    <property type="entry name" value="Single helix bin"/>
    <property type="match status" value="1"/>
</dbReference>
<dbReference type="InterPro" id="IPR010985">
    <property type="entry name" value="Ribbon_hlx_hlx"/>
</dbReference>
<dbReference type="InterPro" id="IPR014795">
    <property type="entry name" value="TacA_1-like"/>
</dbReference>
<dbReference type="PANTHER" id="PTHR35401">
    <property type="entry name" value="COPG FAMILY HELIX-TURN-HELIX PROTEIN-RELATED-RELATED"/>
    <property type="match status" value="1"/>
</dbReference>
<dbReference type="PANTHER" id="PTHR35401:SF1">
    <property type="entry name" value="CYTOPLASMIC PROTEIN"/>
    <property type="match status" value="1"/>
</dbReference>
<dbReference type="Pfam" id="PF08681">
    <property type="entry name" value="TacA1"/>
    <property type="match status" value="1"/>
</dbReference>
<dbReference type="SUPFAM" id="SSF47598">
    <property type="entry name" value="Ribbon-helix-helix"/>
    <property type="match status" value="1"/>
</dbReference>
<accession>A0A0F6BAH8</accession>
<protein>
    <recommendedName>
        <fullName evidence="6">Antitoxin TacA2</fullName>
    </recommendedName>
    <alternativeName>
        <fullName evidence="5">Antitoxin A9</fullName>
    </alternativeName>
</protein>
<keyword id="KW-0002">3D-structure</keyword>
<keyword id="KW-0238">DNA-binding</keyword>
<keyword id="KW-0678">Repressor</keyword>
<keyword id="KW-1277">Toxin-antitoxin system</keyword>
<keyword id="KW-0804">Transcription</keyword>
<keyword id="KW-0805">Transcription regulation</keyword>